<name>HIS1_CHLP8</name>
<keyword id="KW-0028">Amino-acid biosynthesis</keyword>
<keyword id="KW-0067">ATP-binding</keyword>
<keyword id="KW-0963">Cytoplasm</keyword>
<keyword id="KW-0328">Glycosyltransferase</keyword>
<keyword id="KW-0368">Histidine biosynthesis</keyword>
<keyword id="KW-0460">Magnesium</keyword>
<keyword id="KW-0479">Metal-binding</keyword>
<keyword id="KW-0547">Nucleotide-binding</keyword>
<keyword id="KW-0808">Transferase</keyword>
<comment type="function">
    <text evidence="1">Catalyzes the condensation of ATP and 5-phosphoribose 1-diphosphate to form N'-(5'-phosphoribosyl)-ATP (PR-ATP). Has a crucial role in the pathway because the rate of histidine biosynthesis seems to be controlled primarily by regulation of HisG enzymatic activity.</text>
</comment>
<comment type="catalytic activity">
    <reaction evidence="1">
        <text>1-(5-phospho-beta-D-ribosyl)-ATP + diphosphate = 5-phospho-alpha-D-ribose 1-diphosphate + ATP</text>
        <dbReference type="Rhea" id="RHEA:18473"/>
        <dbReference type="ChEBI" id="CHEBI:30616"/>
        <dbReference type="ChEBI" id="CHEBI:33019"/>
        <dbReference type="ChEBI" id="CHEBI:58017"/>
        <dbReference type="ChEBI" id="CHEBI:73183"/>
        <dbReference type="EC" id="2.4.2.17"/>
    </reaction>
</comment>
<comment type="cofactor">
    <cofactor evidence="1">
        <name>Mg(2+)</name>
        <dbReference type="ChEBI" id="CHEBI:18420"/>
    </cofactor>
</comment>
<comment type="activity regulation">
    <text evidence="1">Feedback inhibited by histidine.</text>
</comment>
<comment type="pathway">
    <text evidence="1">Amino-acid biosynthesis; L-histidine biosynthesis; L-histidine from 5-phospho-alpha-D-ribose 1-diphosphate: step 1/9.</text>
</comment>
<comment type="subcellular location">
    <subcellularLocation>
        <location evidence="1">Cytoplasm</location>
    </subcellularLocation>
</comment>
<comment type="similarity">
    <text evidence="1">Belongs to the ATP phosphoribosyltransferase family. Long subfamily.</text>
</comment>
<accession>B3QR09</accession>
<reference key="1">
    <citation type="submission" date="2008-06" db="EMBL/GenBank/DDBJ databases">
        <title>Complete sequence of Chlorobaculum parvum NCIB 8327.</title>
        <authorList>
            <consortium name="US DOE Joint Genome Institute"/>
            <person name="Lucas S."/>
            <person name="Copeland A."/>
            <person name="Lapidus A."/>
            <person name="Glavina del Rio T."/>
            <person name="Dalin E."/>
            <person name="Tice H."/>
            <person name="Bruce D."/>
            <person name="Goodwin L."/>
            <person name="Pitluck S."/>
            <person name="Schmutz J."/>
            <person name="Larimer F."/>
            <person name="Land M."/>
            <person name="Hauser L."/>
            <person name="Kyrpides N."/>
            <person name="Mikhailova N."/>
            <person name="Zhao F."/>
            <person name="Li T."/>
            <person name="Liu Z."/>
            <person name="Overmann J."/>
            <person name="Bryant D.A."/>
            <person name="Richardson P."/>
        </authorList>
    </citation>
    <scope>NUCLEOTIDE SEQUENCE [LARGE SCALE GENOMIC DNA]</scope>
    <source>
        <strain>DSM 263 / NCIMB 8327</strain>
    </source>
</reference>
<gene>
    <name evidence="1" type="primary">hisG</name>
    <name type="ordered locus">Cpar_0247</name>
</gene>
<feature type="chain" id="PRO_1000092728" description="ATP phosphoribosyltransferase">
    <location>
        <begin position="1"/>
        <end position="294"/>
    </location>
</feature>
<protein>
    <recommendedName>
        <fullName evidence="1">ATP phosphoribosyltransferase</fullName>
        <shortName evidence="1">ATP-PRT</shortName>
        <shortName evidence="1">ATP-PRTase</shortName>
        <ecNumber evidence="1">2.4.2.17</ecNumber>
    </recommendedName>
</protein>
<sequence>MSNSNNVLKLGLPKGSLQDSTLELFANAGFHFSVQSRSYFPSIDDDELEAILIRAQEMARYVSQGAFDAGLTGKDWIIETDADVVEVADLVYSKASMRPVRWVLAVPESSPIQSVRDLEGKHIATEVVNITKKYLARNGVNASVEFSWGATEVKPPELADAIVEVTETGSSLRANKLRIVETILESNTKLIANKASWENPWKREKIENMAMLLQGAINAQGKVGLKMNAPKAGLNKLIESIPALRQPTISDLADNAWVAIEVIVDEKVVRHLIPDLKRAGAEGIFEYDINKLID</sequence>
<evidence type="ECO:0000255" key="1">
    <source>
        <dbReference type="HAMAP-Rule" id="MF_00079"/>
    </source>
</evidence>
<dbReference type="EC" id="2.4.2.17" evidence="1"/>
<dbReference type="EMBL" id="CP001099">
    <property type="protein sequence ID" value="ACF10674.1"/>
    <property type="molecule type" value="Genomic_DNA"/>
</dbReference>
<dbReference type="RefSeq" id="WP_012501508.1">
    <property type="nucleotide sequence ID" value="NC_011027.1"/>
</dbReference>
<dbReference type="SMR" id="B3QR09"/>
<dbReference type="STRING" id="517417.Cpar_0247"/>
<dbReference type="KEGG" id="cpc:Cpar_0247"/>
<dbReference type="eggNOG" id="COG0040">
    <property type="taxonomic scope" value="Bacteria"/>
</dbReference>
<dbReference type="HOGENOM" id="CLU_038115_1_1_10"/>
<dbReference type="OrthoDB" id="9801867at2"/>
<dbReference type="UniPathway" id="UPA00031">
    <property type="reaction ID" value="UER00006"/>
</dbReference>
<dbReference type="Proteomes" id="UP000008811">
    <property type="component" value="Chromosome"/>
</dbReference>
<dbReference type="GO" id="GO:0005737">
    <property type="term" value="C:cytoplasm"/>
    <property type="evidence" value="ECO:0007669"/>
    <property type="project" value="UniProtKB-SubCell"/>
</dbReference>
<dbReference type="GO" id="GO:0005524">
    <property type="term" value="F:ATP binding"/>
    <property type="evidence" value="ECO:0007669"/>
    <property type="project" value="UniProtKB-KW"/>
</dbReference>
<dbReference type="GO" id="GO:0003879">
    <property type="term" value="F:ATP phosphoribosyltransferase activity"/>
    <property type="evidence" value="ECO:0007669"/>
    <property type="project" value="UniProtKB-UniRule"/>
</dbReference>
<dbReference type="GO" id="GO:0000287">
    <property type="term" value="F:magnesium ion binding"/>
    <property type="evidence" value="ECO:0007669"/>
    <property type="project" value="UniProtKB-UniRule"/>
</dbReference>
<dbReference type="GO" id="GO:0000105">
    <property type="term" value="P:L-histidine biosynthetic process"/>
    <property type="evidence" value="ECO:0007669"/>
    <property type="project" value="UniProtKB-UniRule"/>
</dbReference>
<dbReference type="CDD" id="cd13593">
    <property type="entry name" value="PBP2_HisGL3"/>
    <property type="match status" value="1"/>
</dbReference>
<dbReference type="FunFam" id="3.30.70.120:FF:000002">
    <property type="entry name" value="ATP phosphoribosyltransferase"/>
    <property type="match status" value="1"/>
</dbReference>
<dbReference type="Gene3D" id="3.30.70.120">
    <property type="match status" value="1"/>
</dbReference>
<dbReference type="Gene3D" id="3.40.190.10">
    <property type="entry name" value="Periplasmic binding protein-like II"/>
    <property type="match status" value="2"/>
</dbReference>
<dbReference type="HAMAP" id="MF_00079">
    <property type="entry name" value="HisG_Long"/>
    <property type="match status" value="1"/>
</dbReference>
<dbReference type="InterPro" id="IPR020621">
    <property type="entry name" value="ATP-PRT_HisG_long"/>
</dbReference>
<dbReference type="InterPro" id="IPR013820">
    <property type="entry name" value="ATP_PRibTrfase_cat"/>
</dbReference>
<dbReference type="InterPro" id="IPR001348">
    <property type="entry name" value="ATP_PRibTrfase_HisG"/>
</dbReference>
<dbReference type="InterPro" id="IPR013115">
    <property type="entry name" value="HisG_C"/>
</dbReference>
<dbReference type="InterPro" id="IPR011322">
    <property type="entry name" value="N-reg_PII-like_a/b"/>
</dbReference>
<dbReference type="InterPro" id="IPR015867">
    <property type="entry name" value="N-reg_PII/ATP_PRibTrfase_C"/>
</dbReference>
<dbReference type="NCBIfam" id="TIGR00070">
    <property type="entry name" value="hisG"/>
    <property type="match status" value="1"/>
</dbReference>
<dbReference type="NCBIfam" id="TIGR03455">
    <property type="entry name" value="HisG_C-term"/>
    <property type="match status" value="1"/>
</dbReference>
<dbReference type="PANTHER" id="PTHR21403:SF10">
    <property type="entry name" value="ATP PHOSPHORIBOSYLTRANSFERASE"/>
    <property type="match status" value="1"/>
</dbReference>
<dbReference type="PANTHER" id="PTHR21403">
    <property type="entry name" value="ATP PHOSPHORIBOSYLTRANSFERASE ATP-PRTASE"/>
    <property type="match status" value="1"/>
</dbReference>
<dbReference type="Pfam" id="PF01634">
    <property type="entry name" value="HisG"/>
    <property type="match status" value="1"/>
</dbReference>
<dbReference type="Pfam" id="PF08029">
    <property type="entry name" value="HisG_C"/>
    <property type="match status" value="1"/>
</dbReference>
<dbReference type="SUPFAM" id="SSF54913">
    <property type="entry name" value="GlnB-like"/>
    <property type="match status" value="1"/>
</dbReference>
<dbReference type="SUPFAM" id="SSF53850">
    <property type="entry name" value="Periplasmic binding protein-like II"/>
    <property type="match status" value="1"/>
</dbReference>
<proteinExistence type="inferred from homology"/>
<organism>
    <name type="scientific">Chlorobaculum parvum (strain DSM 263 / NCIMB 8327)</name>
    <name type="common">Chlorobium vibrioforme subsp. thiosulfatophilum</name>
    <dbReference type="NCBI Taxonomy" id="517417"/>
    <lineage>
        <taxon>Bacteria</taxon>
        <taxon>Pseudomonadati</taxon>
        <taxon>Chlorobiota</taxon>
        <taxon>Chlorobiia</taxon>
        <taxon>Chlorobiales</taxon>
        <taxon>Chlorobiaceae</taxon>
        <taxon>Chlorobaculum</taxon>
    </lineage>
</organism>